<gene>
    <name evidence="1" type="primary">sucC</name>
    <name type="ordered locus">Sputcn32_2267</name>
</gene>
<proteinExistence type="inferred from homology"/>
<dbReference type="EC" id="6.2.1.5" evidence="1"/>
<dbReference type="EMBL" id="CP000681">
    <property type="protein sequence ID" value="ABP75988.1"/>
    <property type="molecule type" value="Genomic_DNA"/>
</dbReference>
<dbReference type="SMR" id="A4Y7Q5"/>
<dbReference type="STRING" id="319224.Sputcn32_2267"/>
<dbReference type="KEGG" id="spc:Sputcn32_2267"/>
<dbReference type="eggNOG" id="COG0045">
    <property type="taxonomic scope" value="Bacteria"/>
</dbReference>
<dbReference type="HOGENOM" id="CLU_037430_0_2_6"/>
<dbReference type="UniPathway" id="UPA00223">
    <property type="reaction ID" value="UER00999"/>
</dbReference>
<dbReference type="GO" id="GO:0005829">
    <property type="term" value="C:cytosol"/>
    <property type="evidence" value="ECO:0007669"/>
    <property type="project" value="TreeGrafter"/>
</dbReference>
<dbReference type="GO" id="GO:0042709">
    <property type="term" value="C:succinate-CoA ligase complex"/>
    <property type="evidence" value="ECO:0007669"/>
    <property type="project" value="TreeGrafter"/>
</dbReference>
<dbReference type="GO" id="GO:0005524">
    <property type="term" value="F:ATP binding"/>
    <property type="evidence" value="ECO:0007669"/>
    <property type="project" value="UniProtKB-UniRule"/>
</dbReference>
<dbReference type="GO" id="GO:0000287">
    <property type="term" value="F:magnesium ion binding"/>
    <property type="evidence" value="ECO:0007669"/>
    <property type="project" value="UniProtKB-UniRule"/>
</dbReference>
<dbReference type="GO" id="GO:0004775">
    <property type="term" value="F:succinate-CoA ligase (ADP-forming) activity"/>
    <property type="evidence" value="ECO:0007669"/>
    <property type="project" value="UniProtKB-UniRule"/>
</dbReference>
<dbReference type="GO" id="GO:0004776">
    <property type="term" value="F:succinate-CoA ligase (GDP-forming) activity"/>
    <property type="evidence" value="ECO:0007669"/>
    <property type="project" value="RHEA"/>
</dbReference>
<dbReference type="GO" id="GO:0006104">
    <property type="term" value="P:succinyl-CoA metabolic process"/>
    <property type="evidence" value="ECO:0007669"/>
    <property type="project" value="TreeGrafter"/>
</dbReference>
<dbReference type="GO" id="GO:0006099">
    <property type="term" value="P:tricarboxylic acid cycle"/>
    <property type="evidence" value="ECO:0007669"/>
    <property type="project" value="UniProtKB-UniRule"/>
</dbReference>
<dbReference type="FunFam" id="3.30.1490.20:FF:000002">
    <property type="entry name" value="Succinate--CoA ligase [ADP-forming] subunit beta"/>
    <property type="match status" value="1"/>
</dbReference>
<dbReference type="FunFam" id="3.30.470.20:FF:000002">
    <property type="entry name" value="Succinate--CoA ligase [ADP-forming] subunit beta"/>
    <property type="match status" value="1"/>
</dbReference>
<dbReference type="FunFam" id="3.40.50.261:FF:000001">
    <property type="entry name" value="Succinate--CoA ligase [ADP-forming] subunit beta"/>
    <property type="match status" value="1"/>
</dbReference>
<dbReference type="Gene3D" id="3.30.1490.20">
    <property type="entry name" value="ATP-grasp fold, A domain"/>
    <property type="match status" value="1"/>
</dbReference>
<dbReference type="Gene3D" id="3.30.470.20">
    <property type="entry name" value="ATP-grasp fold, B domain"/>
    <property type="match status" value="1"/>
</dbReference>
<dbReference type="Gene3D" id="3.40.50.261">
    <property type="entry name" value="Succinyl-CoA synthetase domains"/>
    <property type="match status" value="1"/>
</dbReference>
<dbReference type="HAMAP" id="MF_00558">
    <property type="entry name" value="Succ_CoA_beta"/>
    <property type="match status" value="1"/>
</dbReference>
<dbReference type="InterPro" id="IPR011761">
    <property type="entry name" value="ATP-grasp"/>
</dbReference>
<dbReference type="InterPro" id="IPR013650">
    <property type="entry name" value="ATP-grasp_succ-CoA_synth-type"/>
</dbReference>
<dbReference type="InterPro" id="IPR013815">
    <property type="entry name" value="ATP_grasp_subdomain_1"/>
</dbReference>
<dbReference type="InterPro" id="IPR017866">
    <property type="entry name" value="Succ-CoA_synthase_bsu_CS"/>
</dbReference>
<dbReference type="InterPro" id="IPR005811">
    <property type="entry name" value="SUCC_ACL_C"/>
</dbReference>
<dbReference type="InterPro" id="IPR005809">
    <property type="entry name" value="Succ_CoA_ligase-like_bsu"/>
</dbReference>
<dbReference type="InterPro" id="IPR016102">
    <property type="entry name" value="Succinyl-CoA_synth-like"/>
</dbReference>
<dbReference type="NCBIfam" id="NF001913">
    <property type="entry name" value="PRK00696.1"/>
    <property type="match status" value="1"/>
</dbReference>
<dbReference type="NCBIfam" id="TIGR01016">
    <property type="entry name" value="sucCoAbeta"/>
    <property type="match status" value="1"/>
</dbReference>
<dbReference type="PANTHER" id="PTHR11815:SF10">
    <property type="entry name" value="SUCCINATE--COA LIGASE [GDP-FORMING] SUBUNIT BETA, MITOCHONDRIAL"/>
    <property type="match status" value="1"/>
</dbReference>
<dbReference type="PANTHER" id="PTHR11815">
    <property type="entry name" value="SUCCINYL-COA SYNTHETASE BETA CHAIN"/>
    <property type="match status" value="1"/>
</dbReference>
<dbReference type="Pfam" id="PF08442">
    <property type="entry name" value="ATP-grasp_2"/>
    <property type="match status" value="1"/>
</dbReference>
<dbReference type="Pfam" id="PF00549">
    <property type="entry name" value="Ligase_CoA"/>
    <property type="match status" value="1"/>
</dbReference>
<dbReference type="PIRSF" id="PIRSF001554">
    <property type="entry name" value="SucCS_beta"/>
    <property type="match status" value="1"/>
</dbReference>
<dbReference type="SUPFAM" id="SSF56059">
    <property type="entry name" value="Glutathione synthetase ATP-binding domain-like"/>
    <property type="match status" value="1"/>
</dbReference>
<dbReference type="SUPFAM" id="SSF52210">
    <property type="entry name" value="Succinyl-CoA synthetase domains"/>
    <property type="match status" value="1"/>
</dbReference>
<dbReference type="PROSITE" id="PS50975">
    <property type="entry name" value="ATP_GRASP"/>
    <property type="match status" value="1"/>
</dbReference>
<dbReference type="PROSITE" id="PS01217">
    <property type="entry name" value="SUCCINYL_COA_LIG_3"/>
    <property type="match status" value="1"/>
</dbReference>
<protein>
    <recommendedName>
        <fullName evidence="1">Succinate--CoA ligase [ADP-forming] subunit beta</fullName>
        <ecNumber evidence="1">6.2.1.5</ecNumber>
    </recommendedName>
    <alternativeName>
        <fullName evidence="1">Succinyl-CoA synthetase subunit beta</fullName>
        <shortName evidence="1">SCS-beta</shortName>
    </alternativeName>
</protein>
<feature type="chain" id="PRO_1000082226" description="Succinate--CoA ligase [ADP-forming] subunit beta">
    <location>
        <begin position="1"/>
        <end position="388"/>
    </location>
</feature>
<feature type="domain" description="ATP-grasp" evidence="1">
    <location>
        <begin position="9"/>
        <end position="244"/>
    </location>
</feature>
<feature type="binding site" evidence="1">
    <location>
        <position position="46"/>
    </location>
    <ligand>
        <name>ATP</name>
        <dbReference type="ChEBI" id="CHEBI:30616"/>
    </ligand>
</feature>
<feature type="binding site" evidence="1">
    <location>
        <begin position="53"/>
        <end position="55"/>
    </location>
    <ligand>
        <name>ATP</name>
        <dbReference type="ChEBI" id="CHEBI:30616"/>
    </ligand>
</feature>
<feature type="binding site" evidence="1">
    <location>
        <position position="99"/>
    </location>
    <ligand>
        <name>ATP</name>
        <dbReference type="ChEBI" id="CHEBI:30616"/>
    </ligand>
</feature>
<feature type="binding site" evidence="1">
    <location>
        <position position="102"/>
    </location>
    <ligand>
        <name>ATP</name>
        <dbReference type="ChEBI" id="CHEBI:30616"/>
    </ligand>
</feature>
<feature type="binding site" evidence="1">
    <location>
        <position position="107"/>
    </location>
    <ligand>
        <name>ATP</name>
        <dbReference type="ChEBI" id="CHEBI:30616"/>
    </ligand>
</feature>
<feature type="binding site" evidence="1">
    <location>
        <position position="199"/>
    </location>
    <ligand>
        <name>Mg(2+)</name>
        <dbReference type="ChEBI" id="CHEBI:18420"/>
    </ligand>
</feature>
<feature type="binding site" evidence="1">
    <location>
        <position position="213"/>
    </location>
    <ligand>
        <name>Mg(2+)</name>
        <dbReference type="ChEBI" id="CHEBI:18420"/>
    </ligand>
</feature>
<feature type="binding site" evidence="1">
    <location>
        <position position="264"/>
    </location>
    <ligand>
        <name>substrate</name>
        <note>ligand shared with subunit alpha</note>
    </ligand>
</feature>
<feature type="binding site" evidence="1">
    <location>
        <begin position="321"/>
        <end position="323"/>
    </location>
    <ligand>
        <name>substrate</name>
        <note>ligand shared with subunit alpha</note>
    </ligand>
</feature>
<keyword id="KW-0067">ATP-binding</keyword>
<keyword id="KW-0436">Ligase</keyword>
<keyword id="KW-0460">Magnesium</keyword>
<keyword id="KW-0479">Metal-binding</keyword>
<keyword id="KW-0547">Nucleotide-binding</keyword>
<keyword id="KW-0816">Tricarboxylic acid cycle</keyword>
<reference key="1">
    <citation type="submission" date="2007-04" db="EMBL/GenBank/DDBJ databases">
        <title>Complete sequence of Shewanella putrefaciens CN-32.</title>
        <authorList>
            <consortium name="US DOE Joint Genome Institute"/>
            <person name="Copeland A."/>
            <person name="Lucas S."/>
            <person name="Lapidus A."/>
            <person name="Barry K."/>
            <person name="Detter J.C."/>
            <person name="Glavina del Rio T."/>
            <person name="Hammon N."/>
            <person name="Israni S."/>
            <person name="Dalin E."/>
            <person name="Tice H."/>
            <person name="Pitluck S."/>
            <person name="Chain P."/>
            <person name="Malfatti S."/>
            <person name="Shin M."/>
            <person name="Vergez L."/>
            <person name="Schmutz J."/>
            <person name="Larimer F."/>
            <person name="Land M."/>
            <person name="Hauser L."/>
            <person name="Kyrpides N."/>
            <person name="Mikhailova N."/>
            <person name="Romine M.F."/>
            <person name="Fredrickson J."/>
            <person name="Tiedje J."/>
            <person name="Richardson P."/>
        </authorList>
    </citation>
    <scope>NUCLEOTIDE SEQUENCE [LARGE SCALE GENOMIC DNA]</scope>
    <source>
        <strain>CN-32 / ATCC BAA-453</strain>
    </source>
</reference>
<organism>
    <name type="scientific">Shewanella putrefaciens (strain CN-32 / ATCC BAA-453)</name>
    <dbReference type="NCBI Taxonomy" id="319224"/>
    <lineage>
        <taxon>Bacteria</taxon>
        <taxon>Pseudomonadati</taxon>
        <taxon>Pseudomonadota</taxon>
        <taxon>Gammaproteobacteria</taxon>
        <taxon>Alteromonadales</taxon>
        <taxon>Shewanellaceae</taxon>
        <taxon>Shewanella</taxon>
    </lineage>
</organism>
<evidence type="ECO:0000255" key="1">
    <source>
        <dbReference type="HAMAP-Rule" id="MF_00558"/>
    </source>
</evidence>
<name>SUCC_SHEPC</name>
<accession>A4Y7Q5</accession>
<comment type="function">
    <text evidence="1">Succinyl-CoA synthetase functions in the citric acid cycle (TCA), coupling the hydrolysis of succinyl-CoA to the synthesis of either ATP or GTP and thus represents the only step of substrate-level phosphorylation in the TCA. The beta subunit provides nucleotide specificity of the enzyme and binds the substrate succinate, while the binding sites for coenzyme A and phosphate are found in the alpha subunit.</text>
</comment>
<comment type="catalytic activity">
    <reaction evidence="1">
        <text>succinate + ATP + CoA = succinyl-CoA + ADP + phosphate</text>
        <dbReference type="Rhea" id="RHEA:17661"/>
        <dbReference type="ChEBI" id="CHEBI:30031"/>
        <dbReference type="ChEBI" id="CHEBI:30616"/>
        <dbReference type="ChEBI" id="CHEBI:43474"/>
        <dbReference type="ChEBI" id="CHEBI:57287"/>
        <dbReference type="ChEBI" id="CHEBI:57292"/>
        <dbReference type="ChEBI" id="CHEBI:456216"/>
        <dbReference type="EC" id="6.2.1.5"/>
    </reaction>
    <physiologicalReaction direction="right-to-left" evidence="1">
        <dbReference type="Rhea" id="RHEA:17663"/>
    </physiologicalReaction>
</comment>
<comment type="catalytic activity">
    <reaction evidence="1">
        <text>GTP + succinate + CoA = succinyl-CoA + GDP + phosphate</text>
        <dbReference type="Rhea" id="RHEA:22120"/>
        <dbReference type="ChEBI" id="CHEBI:30031"/>
        <dbReference type="ChEBI" id="CHEBI:37565"/>
        <dbReference type="ChEBI" id="CHEBI:43474"/>
        <dbReference type="ChEBI" id="CHEBI:57287"/>
        <dbReference type="ChEBI" id="CHEBI:57292"/>
        <dbReference type="ChEBI" id="CHEBI:58189"/>
    </reaction>
    <physiologicalReaction direction="right-to-left" evidence="1">
        <dbReference type="Rhea" id="RHEA:22122"/>
    </physiologicalReaction>
</comment>
<comment type="cofactor">
    <cofactor evidence="1">
        <name>Mg(2+)</name>
        <dbReference type="ChEBI" id="CHEBI:18420"/>
    </cofactor>
    <text evidence="1">Binds 1 Mg(2+) ion per subunit.</text>
</comment>
<comment type="pathway">
    <text evidence="1">Carbohydrate metabolism; tricarboxylic acid cycle; succinate from succinyl-CoA (ligase route): step 1/1.</text>
</comment>
<comment type="subunit">
    <text evidence="1">Heterotetramer of two alpha and two beta subunits.</text>
</comment>
<comment type="similarity">
    <text evidence="1">Belongs to the succinate/malate CoA ligase beta subunit family.</text>
</comment>
<sequence>MNLHEYQAKSLFAEYGLPVSEGFACDTAQEAVEAAGRIGGNLWVVKCQVHAGGRGKAGGVKVTGDKEEIRAFAEHWLGKNLVTYQTDEKGQPVAKILVESCTDIANELYLGAVVDRSTRRVVFMASTEGGVEIEKVAEETPELIHKAIIDPLTGPQPYQARDLGFKLGLNPTQMKQFTKIFMGLATMFVDHDFALLEINPLVITTEGNLHCLDGKIGIDGNALFRQPKVKAMHDPSQDDAREAHAAMFELNYVALDGNVGCMVNGAGLAMGTMDIVNLHGGKPANFLDVGGGATKERVAEAFKIILSDSNVKAVLVNIFGGIVRCDMIAEGIIGAVKEVGVKVPVVVRLEGTNAELGREVLAKSGLDIIAATSLTDAAERVVKAAEGK</sequence>